<dbReference type="EMBL" id="CP000750">
    <property type="protein sequence ID" value="ABS02195.1"/>
    <property type="molecule type" value="Genomic_DNA"/>
</dbReference>
<dbReference type="RefSeq" id="WP_012084962.1">
    <property type="nucleotide sequence ID" value="NC_009664.2"/>
</dbReference>
<dbReference type="SMR" id="A6W5V6"/>
<dbReference type="STRING" id="266940.Krad_0706"/>
<dbReference type="KEGG" id="kra:Krad_0706"/>
<dbReference type="eggNOG" id="COG1841">
    <property type="taxonomic scope" value="Bacteria"/>
</dbReference>
<dbReference type="HOGENOM" id="CLU_131047_2_1_11"/>
<dbReference type="OrthoDB" id="9812790at2"/>
<dbReference type="Proteomes" id="UP000001116">
    <property type="component" value="Chromosome"/>
</dbReference>
<dbReference type="GO" id="GO:0022625">
    <property type="term" value="C:cytosolic large ribosomal subunit"/>
    <property type="evidence" value="ECO:0007669"/>
    <property type="project" value="TreeGrafter"/>
</dbReference>
<dbReference type="GO" id="GO:0003735">
    <property type="term" value="F:structural constituent of ribosome"/>
    <property type="evidence" value="ECO:0007669"/>
    <property type="project" value="InterPro"/>
</dbReference>
<dbReference type="GO" id="GO:0006412">
    <property type="term" value="P:translation"/>
    <property type="evidence" value="ECO:0007669"/>
    <property type="project" value="UniProtKB-UniRule"/>
</dbReference>
<dbReference type="CDD" id="cd01658">
    <property type="entry name" value="Ribosomal_L30"/>
    <property type="match status" value="1"/>
</dbReference>
<dbReference type="FunFam" id="3.30.1390.20:FF:000001">
    <property type="entry name" value="50S ribosomal protein L30"/>
    <property type="match status" value="1"/>
</dbReference>
<dbReference type="Gene3D" id="3.30.1390.20">
    <property type="entry name" value="Ribosomal protein L30, ferredoxin-like fold domain"/>
    <property type="match status" value="1"/>
</dbReference>
<dbReference type="HAMAP" id="MF_01371_B">
    <property type="entry name" value="Ribosomal_uL30_B"/>
    <property type="match status" value="1"/>
</dbReference>
<dbReference type="InterPro" id="IPR036919">
    <property type="entry name" value="Ribo_uL30_ferredoxin-like_sf"/>
</dbReference>
<dbReference type="InterPro" id="IPR005996">
    <property type="entry name" value="Ribosomal_uL30_bac-type"/>
</dbReference>
<dbReference type="InterPro" id="IPR018038">
    <property type="entry name" value="Ribosomal_uL30_CS"/>
</dbReference>
<dbReference type="InterPro" id="IPR016082">
    <property type="entry name" value="Ribosomal_uL30_ferredoxin-like"/>
</dbReference>
<dbReference type="NCBIfam" id="TIGR01308">
    <property type="entry name" value="rpmD_bact"/>
    <property type="match status" value="1"/>
</dbReference>
<dbReference type="PANTHER" id="PTHR15892:SF2">
    <property type="entry name" value="LARGE RIBOSOMAL SUBUNIT PROTEIN UL30M"/>
    <property type="match status" value="1"/>
</dbReference>
<dbReference type="PANTHER" id="PTHR15892">
    <property type="entry name" value="MITOCHONDRIAL RIBOSOMAL PROTEIN L30"/>
    <property type="match status" value="1"/>
</dbReference>
<dbReference type="Pfam" id="PF00327">
    <property type="entry name" value="Ribosomal_L30"/>
    <property type="match status" value="1"/>
</dbReference>
<dbReference type="PIRSF" id="PIRSF002211">
    <property type="entry name" value="Ribosomal_L30_bac-type"/>
    <property type="match status" value="1"/>
</dbReference>
<dbReference type="SUPFAM" id="SSF55129">
    <property type="entry name" value="Ribosomal protein L30p/L7e"/>
    <property type="match status" value="1"/>
</dbReference>
<dbReference type="PROSITE" id="PS00634">
    <property type="entry name" value="RIBOSOMAL_L30"/>
    <property type="match status" value="1"/>
</dbReference>
<feature type="chain" id="PRO_1000087254" description="Large ribosomal subunit protein uL30">
    <location>
        <begin position="1"/>
        <end position="60"/>
    </location>
</feature>
<proteinExistence type="inferred from homology"/>
<organism>
    <name type="scientific">Kineococcus radiotolerans (strain ATCC BAA-149 / DSM 14245 / SRS30216)</name>
    <dbReference type="NCBI Taxonomy" id="266940"/>
    <lineage>
        <taxon>Bacteria</taxon>
        <taxon>Bacillati</taxon>
        <taxon>Actinomycetota</taxon>
        <taxon>Actinomycetes</taxon>
        <taxon>Kineosporiales</taxon>
        <taxon>Kineosporiaceae</taxon>
        <taxon>Kineococcus</taxon>
    </lineage>
</organism>
<protein>
    <recommendedName>
        <fullName evidence="1">Large ribosomal subunit protein uL30</fullName>
    </recommendedName>
    <alternativeName>
        <fullName evidence="2">50S ribosomal protein L30</fullName>
    </alternativeName>
</protein>
<name>RL30_KINRD</name>
<evidence type="ECO:0000255" key="1">
    <source>
        <dbReference type="HAMAP-Rule" id="MF_01371"/>
    </source>
</evidence>
<evidence type="ECO:0000305" key="2"/>
<gene>
    <name evidence="1" type="primary">rpmD</name>
    <name type="ordered locus">Krad_0706</name>
</gene>
<sequence>MARLKVTQINSGIGRKQNQRETLRSLGLHKIGQSVVKDDKPEFRGMVNTVSHLVTVEEVD</sequence>
<reference key="1">
    <citation type="journal article" date="2008" name="PLoS ONE">
        <title>Survival in nuclear waste, extreme resistance, and potential applications gleaned from the genome sequence of Kineococcus radiotolerans SRS30216.</title>
        <authorList>
            <person name="Bagwell C.E."/>
            <person name="Bhat S."/>
            <person name="Hawkins G.M."/>
            <person name="Smith B.W."/>
            <person name="Biswas T."/>
            <person name="Hoover T.R."/>
            <person name="Saunders E."/>
            <person name="Han C.S."/>
            <person name="Tsodikov O.V."/>
            <person name="Shimkets L.J."/>
        </authorList>
    </citation>
    <scope>NUCLEOTIDE SEQUENCE [LARGE SCALE GENOMIC DNA]</scope>
    <source>
        <strain>ATCC BAA-149 / DSM 14245 / SRS30216</strain>
    </source>
</reference>
<accession>A6W5V6</accession>
<keyword id="KW-1185">Reference proteome</keyword>
<keyword id="KW-0687">Ribonucleoprotein</keyword>
<keyword id="KW-0689">Ribosomal protein</keyword>
<comment type="subunit">
    <text evidence="1">Part of the 50S ribosomal subunit.</text>
</comment>
<comment type="similarity">
    <text evidence="1">Belongs to the universal ribosomal protein uL30 family.</text>
</comment>